<dbReference type="EMBL" id="CP000148">
    <property type="protein sequence ID" value="ABB30440.1"/>
    <property type="molecule type" value="Genomic_DNA"/>
</dbReference>
<dbReference type="SMR" id="Q39Z84"/>
<dbReference type="STRING" id="269799.Gmet_0194"/>
<dbReference type="KEGG" id="gme:Gmet_0194"/>
<dbReference type="eggNOG" id="COG1641">
    <property type="taxonomic scope" value="Bacteria"/>
</dbReference>
<dbReference type="HOGENOM" id="CLU_028523_2_1_7"/>
<dbReference type="Proteomes" id="UP000007073">
    <property type="component" value="Chromosome"/>
</dbReference>
<dbReference type="GO" id="GO:0016829">
    <property type="term" value="F:lyase activity"/>
    <property type="evidence" value="ECO:0007669"/>
    <property type="project" value="UniProtKB-UniRule"/>
</dbReference>
<dbReference type="GO" id="GO:0016151">
    <property type="term" value="F:nickel cation binding"/>
    <property type="evidence" value="ECO:0007669"/>
    <property type="project" value="UniProtKB-UniRule"/>
</dbReference>
<dbReference type="Gene3D" id="3.10.20.300">
    <property type="entry name" value="mk0293 like domain"/>
    <property type="match status" value="1"/>
</dbReference>
<dbReference type="Gene3D" id="3.30.70.1380">
    <property type="entry name" value="Transcriptional regulatory protein pf0864 domain like"/>
    <property type="match status" value="1"/>
</dbReference>
<dbReference type="HAMAP" id="MF_01074">
    <property type="entry name" value="LarC"/>
    <property type="match status" value="1"/>
</dbReference>
<dbReference type="InterPro" id="IPR002822">
    <property type="entry name" value="Ni_insertion"/>
</dbReference>
<dbReference type="NCBIfam" id="TIGR00299">
    <property type="entry name" value="nickel pincer cofactor biosynthesis protein LarC"/>
    <property type="match status" value="1"/>
</dbReference>
<dbReference type="PANTHER" id="PTHR36566">
    <property type="entry name" value="NICKEL INSERTION PROTEIN-RELATED"/>
    <property type="match status" value="1"/>
</dbReference>
<dbReference type="PANTHER" id="PTHR36566:SF1">
    <property type="entry name" value="PYRIDINIUM-3,5-BISTHIOCARBOXYLIC ACID MONONUCLEOTIDE NICKEL INSERTION PROTEIN"/>
    <property type="match status" value="1"/>
</dbReference>
<dbReference type="Pfam" id="PF01969">
    <property type="entry name" value="Ni_insertion"/>
    <property type="match status" value="1"/>
</dbReference>
<gene>
    <name type="ordered locus">Gmet_0194</name>
</gene>
<reference key="1">
    <citation type="journal article" date="2009" name="BMC Microbiol.">
        <title>The genome sequence of Geobacter metallireducens: features of metabolism, physiology and regulation common and dissimilar to Geobacter sulfurreducens.</title>
        <authorList>
            <person name="Aklujkar M."/>
            <person name="Krushkal J."/>
            <person name="DiBartolo G."/>
            <person name="Lapidus A."/>
            <person name="Land M.L."/>
            <person name="Lovley D.R."/>
        </authorList>
    </citation>
    <scope>NUCLEOTIDE SEQUENCE [LARGE SCALE GENOMIC DNA]</scope>
    <source>
        <strain>ATCC 53774 / DSM 7210 / GS-15</strain>
    </source>
</reference>
<protein>
    <recommendedName>
        <fullName evidence="1">Putative nickel insertion protein</fullName>
    </recommendedName>
</protein>
<sequence>MKILYCDCFAGIAGDMTVAALLDLGVPFEVVEGAVKQLPLPHSSYSLAVERTSRKGIAAARFVVHVEEHQPHRHYADIAAMIEESTLAEGVKEKAQRIFFRLAEAEAKVHGVEIGRVHFHEVGAVDSIVDIVGTAAALEWLGIDAVHAAPLPLGSGFVETAHGRLPVPAPATAELLRGLPIHGEAGSGERVTPTGAAILAALATGFGRAPAMTVTGVGCGAGTKDFDDIPNVMRLFMGEAEGGLLRDEVCIIETHIDDMNPEILGHVLERLMEAGALDAAFSPLQMKKNRPAVKLTVIARPGQRDELAALVLRETSAIGVRFYPASRLKLSREKEERPTSLGPVTVKVIRDGGRVVRVTPEYDACRRIAAEREMSLLEVYRIVEREAGEP</sequence>
<feature type="chain" id="PRO_1000064649" description="Putative nickel insertion protein">
    <location>
        <begin position="1"/>
        <end position="390"/>
    </location>
</feature>
<accession>Q39Z84</accession>
<keyword id="KW-0533">Nickel</keyword>
<keyword id="KW-1185">Reference proteome</keyword>
<name>Y194_GEOMG</name>
<evidence type="ECO:0000255" key="1">
    <source>
        <dbReference type="HAMAP-Rule" id="MF_01074"/>
    </source>
</evidence>
<organism>
    <name type="scientific">Geobacter metallireducens (strain ATCC 53774 / DSM 7210 / GS-15)</name>
    <dbReference type="NCBI Taxonomy" id="269799"/>
    <lineage>
        <taxon>Bacteria</taxon>
        <taxon>Pseudomonadati</taxon>
        <taxon>Thermodesulfobacteriota</taxon>
        <taxon>Desulfuromonadia</taxon>
        <taxon>Geobacterales</taxon>
        <taxon>Geobacteraceae</taxon>
        <taxon>Geobacter</taxon>
    </lineage>
</organism>
<proteinExistence type="inferred from homology"/>
<comment type="similarity">
    <text evidence="1">Belongs to the LarC family.</text>
</comment>